<gene>
    <name evidence="1" type="primary">hemA</name>
    <name type="ordered locus">Tneu_1917</name>
</gene>
<reference key="1">
    <citation type="submission" date="2008-03" db="EMBL/GenBank/DDBJ databases">
        <title>Complete sequence of Thermoproteus neutrophilus V24Sta.</title>
        <authorList>
            <consortium name="US DOE Joint Genome Institute"/>
            <person name="Copeland A."/>
            <person name="Lucas S."/>
            <person name="Lapidus A."/>
            <person name="Glavina del Rio T."/>
            <person name="Dalin E."/>
            <person name="Tice H."/>
            <person name="Bruce D."/>
            <person name="Goodwin L."/>
            <person name="Pitluck S."/>
            <person name="Sims D."/>
            <person name="Brettin T."/>
            <person name="Detter J.C."/>
            <person name="Han C."/>
            <person name="Kuske C.R."/>
            <person name="Schmutz J."/>
            <person name="Larimer F."/>
            <person name="Land M."/>
            <person name="Hauser L."/>
            <person name="Kyrpides N."/>
            <person name="Mikhailova N."/>
            <person name="Biddle J.F."/>
            <person name="Zhang Z."/>
            <person name="Fitz-Gibbon S.T."/>
            <person name="Lowe T.M."/>
            <person name="Saltikov C."/>
            <person name="House C.H."/>
            <person name="Richardson P."/>
        </authorList>
    </citation>
    <scope>NUCLEOTIDE SEQUENCE [LARGE SCALE GENOMIC DNA]</scope>
    <source>
        <strain>DSM 2338 / JCM 9278 / NBRC 100436 / V24Sta</strain>
    </source>
</reference>
<name>HEM1_PYRNV</name>
<feature type="chain" id="PRO_1000093175" description="Glutamyl-tRNA reductase">
    <location>
        <begin position="1"/>
        <end position="393"/>
    </location>
</feature>
<feature type="active site" description="Nucleophile" evidence="1">
    <location>
        <position position="48"/>
    </location>
</feature>
<feature type="binding site" evidence="1">
    <location>
        <begin position="47"/>
        <end position="50"/>
    </location>
    <ligand>
        <name>substrate</name>
    </ligand>
</feature>
<feature type="binding site" evidence="1">
    <location>
        <position position="98"/>
    </location>
    <ligand>
        <name>substrate</name>
    </ligand>
</feature>
<feature type="binding site" evidence="1">
    <location>
        <begin position="103"/>
        <end position="105"/>
    </location>
    <ligand>
        <name>substrate</name>
    </ligand>
</feature>
<feature type="binding site" evidence="1">
    <location>
        <position position="109"/>
    </location>
    <ligand>
        <name>substrate</name>
    </ligand>
</feature>
<feature type="binding site" evidence="1">
    <location>
        <begin position="177"/>
        <end position="182"/>
    </location>
    <ligand>
        <name>NADP(+)</name>
        <dbReference type="ChEBI" id="CHEBI:58349"/>
    </ligand>
</feature>
<feature type="site" description="Important for activity" evidence="1">
    <location>
        <position position="88"/>
    </location>
</feature>
<proteinExistence type="inferred from homology"/>
<sequence>MDLLAPLSAVVLTYREVSAEALGKVGQEMKRCIERRARAFPMYVLHTCSRVEAYLYGAPPEEVQEVAEAYRRYVDSVRVITGAEAARHLFRVAAGLDSILIGETDVLGQVEEAFDRQVRAGYTRGLLKTVVERAVRVGKRVRTETAISRGPRGLGSLSIIYVSRLLDLRQAKAAVLGAGAVGSGLAMELASRGVGKLYILNRTFEKAREVAAKTGGEARPLTREEVERCLRECDVVFSSVHSMEYVIDRVPEGASVKIVVDLGVPQTVAPGLPVKVVRIEDLRQVAEQYNAERAAEVAKAEAIVEEELAALPRLLARRYVEETVAALLETAMTAAEEEGARAGCDAAALAAKTTVKRVLLPLVEKMKKMAEDGQMEEAVRLANVLTQAVGRKT</sequence>
<dbReference type="EC" id="1.2.1.70" evidence="1"/>
<dbReference type="EMBL" id="CP001014">
    <property type="protein sequence ID" value="ACB40832.1"/>
    <property type="molecule type" value="Genomic_DNA"/>
</dbReference>
<dbReference type="RefSeq" id="WP_012351251.1">
    <property type="nucleotide sequence ID" value="NC_010525.1"/>
</dbReference>
<dbReference type="SMR" id="B1YBN0"/>
<dbReference type="STRING" id="444157.Tneu_1917"/>
<dbReference type="GeneID" id="6164814"/>
<dbReference type="KEGG" id="tne:Tneu_1917"/>
<dbReference type="eggNOG" id="arCOG01036">
    <property type="taxonomic scope" value="Archaea"/>
</dbReference>
<dbReference type="HOGENOM" id="CLU_035113_0_0_2"/>
<dbReference type="OrthoDB" id="4562at2157"/>
<dbReference type="UniPathway" id="UPA00251">
    <property type="reaction ID" value="UER00316"/>
</dbReference>
<dbReference type="Proteomes" id="UP000001694">
    <property type="component" value="Chromosome"/>
</dbReference>
<dbReference type="GO" id="GO:0008883">
    <property type="term" value="F:glutamyl-tRNA reductase activity"/>
    <property type="evidence" value="ECO:0007669"/>
    <property type="project" value="UniProtKB-UniRule"/>
</dbReference>
<dbReference type="GO" id="GO:0050661">
    <property type="term" value="F:NADP binding"/>
    <property type="evidence" value="ECO:0007669"/>
    <property type="project" value="InterPro"/>
</dbReference>
<dbReference type="GO" id="GO:0019353">
    <property type="term" value="P:protoporphyrinogen IX biosynthetic process from glutamate"/>
    <property type="evidence" value="ECO:0007669"/>
    <property type="project" value="TreeGrafter"/>
</dbReference>
<dbReference type="Gene3D" id="3.30.460.30">
    <property type="entry name" value="Glutamyl-tRNA reductase, N-terminal domain"/>
    <property type="match status" value="1"/>
</dbReference>
<dbReference type="Gene3D" id="3.40.50.720">
    <property type="entry name" value="NAD(P)-binding Rossmann-like Domain"/>
    <property type="match status" value="1"/>
</dbReference>
<dbReference type="HAMAP" id="MF_00087">
    <property type="entry name" value="Glu_tRNA_reductase"/>
    <property type="match status" value="1"/>
</dbReference>
<dbReference type="InterPro" id="IPR000343">
    <property type="entry name" value="4pyrrol_synth_GluRdtase"/>
</dbReference>
<dbReference type="InterPro" id="IPR015895">
    <property type="entry name" value="4pyrrol_synth_GluRdtase_N"/>
</dbReference>
<dbReference type="InterPro" id="IPR018214">
    <property type="entry name" value="GluRdtase_CS"/>
</dbReference>
<dbReference type="InterPro" id="IPR036453">
    <property type="entry name" value="GluRdtase_dimer_dom_sf"/>
</dbReference>
<dbReference type="InterPro" id="IPR036343">
    <property type="entry name" value="GluRdtase_N_sf"/>
</dbReference>
<dbReference type="InterPro" id="IPR036291">
    <property type="entry name" value="NAD(P)-bd_dom_sf"/>
</dbReference>
<dbReference type="InterPro" id="IPR006151">
    <property type="entry name" value="Shikm_DH/Glu-tRNA_Rdtase"/>
</dbReference>
<dbReference type="PANTHER" id="PTHR43013">
    <property type="entry name" value="GLUTAMYL-TRNA REDUCTASE"/>
    <property type="match status" value="1"/>
</dbReference>
<dbReference type="PANTHER" id="PTHR43013:SF1">
    <property type="entry name" value="GLUTAMYL-TRNA REDUCTASE"/>
    <property type="match status" value="1"/>
</dbReference>
<dbReference type="Pfam" id="PF05201">
    <property type="entry name" value="GlutR_N"/>
    <property type="match status" value="1"/>
</dbReference>
<dbReference type="Pfam" id="PF01488">
    <property type="entry name" value="Shikimate_DH"/>
    <property type="match status" value="1"/>
</dbReference>
<dbReference type="PIRSF" id="PIRSF000445">
    <property type="entry name" value="4pyrrol_synth_GluRdtase"/>
    <property type="match status" value="1"/>
</dbReference>
<dbReference type="SUPFAM" id="SSF69742">
    <property type="entry name" value="Glutamyl tRNA-reductase catalytic, N-terminal domain"/>
    <property type="match status" value="1"/>
</dbReference>
<dbReference type="SUPFAM" id="SSF69075">
    <property type="entry name" value="Glutamyl tRNA-reductase dimerization domain"/>
    <property type="match status" value="1"/>
</dbReference>
<dbReference type="SUPFAM" id="SSF51735">
    <property type="entry name" value="NAD(P)-binding Rossmann-fold domains"/>
    <property type="match status" value="1"/>
</dbReference>
<dbReference type="PROSITE" id="PS00747">
    <property type="entry name" value="GLUTR"/>
    <property type="match status" value="1"/>
</dbReference>
<protein>
    <recommendedName>
        <fullName evidence="1">Glutamyl-tRNA reductase</fullName>
        <shortName evidence="1">GluTR</shortName>
        <ecNumber evidence="1">1.2.1.70</ecNumber>
    </recommendedName>
</protein>
<organism>
    <name type="scientific">Pyrobaculum neutrophilum (strain DSM 2338 / JCM 9278 / NBRC 100436 / V24Sta)</name>
    <name type="common">Thermoproteus neutrophilus</name>
    <dbReference type="NCBI Taxonomy" id="444157"/>
    <lineage>
        <taxon>Archaea</taxon>
        <taxon>Thermoproteota</taxon>
        <taxon>Thermoprotei</taxon>
        <taxon>Thermoproteales</taxon>
        <taxon>Thermoproteaceae</taxon>
        <taxon>Pyrobaculum</taxon>
    </lineage>
</organism>
<accession>B1YBN0</accession>
<evidence type="ECO:0000255" key="1">
    <source>
        <dbReference type="HAMAP-Rule" id="MF_00087"/>
    </source>
</evidence>
<keyword id="KW-0521">NADP</keyword>
<keyword id="KW-0560">Oxidoreductase</keyword>
<keyword id="KW-0627">Porphyrin biosynthesis</keyword>
<comment type="function">
    <text evidence="1">Catalyzes the NADPH-dependent reduction of glutamyl-tRNA(Glu) to glutamate 1-semialdehyde (GSA).</text>
</comment>
<comment type="catalytic activity">
    <reaction evidence="1">
        <text>(S)-4-amino-5-oxopentanoate + tRNA(Glu) + NADP(+) = L-glutamyl-tRNA(Glu) + NADPH + H(+)</text>
        <dbReference type="Rhea" id="RHEA:12344"/>
        <dbReference type="Rhea" id="RHEA-COMP:9663"/>
        <dbReference type="Rhea" id="RHEA-COMP:9680"/>
        <dbReference type="ChEBI" id="CHEBI:15378"/>
        <dbReference type="ChEBI" id="CHEBI:57501"/>
        <dbReference type="ChEBI" id="CHEBI:57783"/>
        <dbReference type="ChEBI" id="CHEBI:58349"/>
        <dbReference type="ChEBI" id="CHEBI:78442"/>
        <dbReference type="ChEBI" id="CHEBI:78520"/>
        <dbReference type="EC" id="1.2.1.70"/>
    </reaction>
</comment>
<comment type="pathway">
    <text evidence="1">Porphyrin-containing compound metabolism; protoporphyrin-IX biosynthesis; 5-aminolevulinate from L-glutamyl-tRNA(Glu): step 1/2.</text>
</comment>
<comment type="subunit">
    <text evidence="1">Homodimer.</text>
</comment>
<comment type="domain">
    <text evidence="1">Possesses an unusual extended V-shaped dimeric structure with each monomer consisting of three distinct domains arranged along a curved 'spinal' alpha-helix. The N-terminal catalytic domain specifically recognizes the glutamate moiety of the substrate. The second domain is the NADPH-binding domain, and the third C-terminal domain is responsible for dimerization.</text>
</comment>
<comment type="miscellaneous">
    <text evidence="1">During catalysis, the active site Cys acts as a nucleophile attacking the alpha-carbonyl group of tRNA-bound glutamate with the formation of a thioester intermediate between enzyme and glutamate, and the concomitant release of tRNA(Glu). The thioester intermediate is finally reduced by direct hydride transfer from NADPH, to form the product GSA.</text>
</comment>
<comment type="similarity">
    <text evidence="1">Belongs to the glutamyl-tRNA reductase family.</text>
</comment>